<sequence>MSAANPETPNSTISREASTQSSSAAASQGWVLPEGKIVPNTVFVGGIDARMDETEIGSCFGRYGSVKEVKIITNRTGVSKGYGFVSFVNDVDVQKIVGSQIHFHGKKLKLGPAIRKQKLCARHVQPRPLVVNPPPPPQFQNVWRNPNTETYLQPQITPNPVTQHVQAYSAYPHSPGQVITGCQLLVYNYQEYPTYPDSAFQVTTGYQLPVYNYQPFPAYPRSPFQVTAGYQLPVYNYQAFPAYPNSPFQVATGYQFPVYNYQPFPAYPSSPFQVTAGYQLPVYNYQAFPAYPNSPFQVATGYQFPVYNYQAFPAYPNSPVQVTTGYQLPVYNYQAFPAYPNSPFQVATGYQFPVYNYQAFPAYPNSPVQVTTGYQLPVYNYQAFPAYPNSPFQVATGYQFPVYNYQAFPAYPNSPVQVTTGYQLPVYNYQAFPAYPNSAVQVTTGYQFHVYNYQMPPQCPVGEQRRNLWTEAYKWWYLVCLIQRRD</sequence>
<feature type="chain" id="PRO_0000081556" description="Deleted in azoospermia protein 3">
    <location>
        <begin position="1"/>
        <end position="486"/>
    </location>
</feature>
<feature type="domain" description="RRM" evidence="1">
    <location>
        <begin position="40"/>
        <end position="115"/>
    </location>
</feature>
<feature type="domain" description="DAZ 1" evidence="2">
    <location>
        <begin position="167"/>
        <end position="190"/>
    </location>
</feature>
<feature type="domain" description="DAZ 2" evidence="2">
    <location>
        <begin position="191"/>
        <end position="214"/>
    </location>
</feature>
<feature type="domain" description="DAZ 3" evidence="2">
    <location>
        <begin position="215"/>
        <end position="238"/>
    </location>
</feature>
<feature type="domain" description="DAZ 4" evidence="2">
    <location>
        <begin position="239"/>
        <end position="262"/>
    </location>
</feature>
<feature type="domain" description="DAZ 5" evidence="2">
    <location>
        <begin position="263"/>
        <end position="286"/>
    </location>
</feature>
<feature type="domain" description="DAZ 6" evidence="2">
    <location>
        <begin position="287"/>
        <end position="310"/>
    </location>
</feature>
<feature type="domain" description="DAZ 7" evidence="2">
    <location>
        <begin position="311"/>
        <end position="334"/>
    </location>
</feature>
<feature type="domain" description="DAZ 8" evidence="2">
    <location>
        <begin position="335"/>
        <end position="358"/>
    </location>
</feature>
<feature type="domain" description="DAZ 9" evidence="2">
    <location>
        <begin position="359"/>
        <end position="382"/>
    </location>
</feature>
<feature type="domain" description="DAZ 10" evidence="2">
    <location>
        <begin position="383"/>
        <end position="406"/>
    </location>
</feature>
<feature type="domain" description="DAZ 11" evidence="2">
    <location>
        <begin position="407"/>
        <end position="430"/>
    </location>
</feature>
<feature type="domain" description="DAZ 12" evidence="2">
    <location>
        <begin position="431"/>
        <end position="454"/>
    </location>
</feature>
<feature type="region of interest" description="Disordered" evidence="3">
    <location>
        <begin position="1"/>
        <end position="27"/>
    </location>
</feature>
<feature type="compositionally biased region" description="Polar residues" evidence="3">
    <location>
        <begin position="1"/>
        <end position="10"/>
    </location>
</feature>
<feature type="compositionally biased region" description="Low complexity" evidence="3">
    <location>
        <begin position="11"/>
        <end position="27"/>
    </location>
</feature>
<feature type="splice variant" id="VSP_040218" description="In isoform 2." evidence="13">
    <location>
        <begin position="222"/>
        <end position="269"/>
    </location>
</feature>
<comment type="function">
    <text>RNA-binding protein that plays an essential role in spermatogenesis. May act by binding to the 3'-UTR of mRNAs and regulating their translation.</text>
</comment>
<comment type="subunit">
    <text evidence="4 5 9 10">Forms a heterodimer with BOLL and DAZL. Interacts with PUM2, DAZAP1, DAZAP2, DZIP1 and DZIP3.</text>
</comment>
<comment type="interaction">
    <interactant intactId="EBI-25830216">
        <id>Q9NR90-2</id>
    </interactant>
    <interactant intactId="EBI-640741">
        <id>P01023</id>
        <label>A2M</label>
    </interactant>
    <organismsDiffer>false</organismsDiffer>
    <experiments>3</experiments>
</comment>
<comment type="interaction">
    <interactant intactId="EBI-25830216">
        <id>Q9NR90-2</id>
    </interactant>
    <interactant intactId="EBI-10968534">
        <id>P50570-2</id>
        <label>DNM2</label>
    </interactant>
    <organismsDiffer>false</organismsDiffer>
    <experiments>3</experiments>
</comment>
<comment type="interaction">
    <interactant intactId="EBI-25830216">
        <id>Q9NR90-2</id>
    </interactant>
    <interactant intactId="EBI-11110431">
        <id>Q8TB36</id>
        <label>GDAP1</label>
    </interactant>
    <organismsDiffer>false</organismsDiffer>
    <experiments>3</experiments>
</comment>
<comment type="interaction">
    <interactant intactId="EBI-25830216">
        <id>Q9NR90-2</id>
    </interactant>
    <interactant intactId="EBI-395421">
        <id>Q16637</id>
        <label>SMN2</label>
    </interactant>
    <organismsDiffer>false</organismsDiffer>
    <experiments>3</experiments>
</comment>
<comment type="interaction">
    <interactant intactId="EBI-25830216">
        <id>Q9NR90-2</id>
    </interactant>
    <interactant intactId="EBI-25847109">
        <id>O14656-2</id>
        <label>TOR1A</label>
    </interactant>
    <organismsDiffer>false</organismsDiffer>
    <experiments>3</experiments>
</comment>
<comment type="subcellular location">
    <subcellularLocation>
        <location evidence="7 12">Cytoplasm</location>
    </subcellularLocation>
    <subcellularLocation>
        <location evidence="7">Nucleus</location>
    </subcellularLocation>
    <text>Predominantly cytoplasmic. Nuclear at some stages of spermatozoide development. Localizes both to the nuclei and cytoplasm of spermatozoide differentiation. Nuclear in fetal gonocytes and in spermatogonial nuclei. It then relocates to the cytoplasm during male meiosis.</text>
</comment>
<comment type="alternative products">
    <event type="alternative splicing"/>
    <isoform>
        <id>Q9NR90-1</id>
        <name>1</name>
        <sequence type="displayed"/>
    </isoform>
    <isoform>
        <id>Q9NR90-2</id>
        <name>2</name>
        <sequence type="described" ref="VSP_040218"/>
    </isoform>
</comment>
<comment type="tissue specificity">
    <text evidence="6">Testis specific.</text>
</comment>
<comment type="domain">
    <text>The DAZ domains are essential and mediate the interaction with DAZAP1 and DAZAP2.</text>
</comment>
<comment type="polymorphism">
    <text evidence="15">The number as well as the precise structure of the DAZ proteins probably differs within the population.</text>
</comment>
<comment type="disease" evidence="8 11">
    <disease id="DI-02062">
        <name>Spermatogenic failure Y-linked 2</name>
        <acronym>SPGFY2</acronym>
        <description>A disorder resulting in the absence (azoospermia) or reduction (oligozoospermia) of sperm in the semen, leading to male infertility.</description>
        <dbReference type="MIM" id="415000"/>
    </disease>
    <text>The disease may be caused by variants affecting the gene represented in this entry. AZFc deletions in the Yq11.23 region including the DAZ genes are the most common known genetic cause of human male infertility.</text>
</comment>
<comment type="miscellaneous">
    <text>The DAZ proteins (DAZ, DAZ2, DAZ4 and DAZ4) are all encoded by a strongly repeated region of the Y chromosome, in two clusters each comprising an inverted pair of DAZ genes. They are very similar, which gives their indidual characterization difficult. Thus, most experiments do not discriminate between the different members. One can therefore suppose that reported interactions with a DAZ protein involve all the 4 proteins.</text>
</comment>
<comment type="similarity">
    <text evidence="2 14">Belongs to the RRM DAZ family.</text>
</comment>
<gene>
    <name type="primary">DAZ3</name>
</gene>
<proteinExistence type="evidence at protein level"/>
<name>DAZ3_HUMAN</name>
<organism>
    <name type="scientific">Homo sapiens</name>
    <name type="common">Human</name>
    <dbReference type="NCBI Taxonomy" id="9606"/>
    <lineage>
        <taxon>Eukaryota</taxon>
        <taxon>Metazoa</taxon>
        <taxon>Chordata</taxon>
        <taxon>Craniata</taxon>
        <taxon>Vertebrata</taxon>
        <taxon>Euteleostomi</taxon>
        <taxon>Mammalia</taxon>
        <taxon>Eutheria</taxon>
        <taxon>Euarchontoglires</taxon>
        <taxon>Primates</taxon>
        <taxon>Haplorrhini</taxon>
        <taxon>Catarrhini</taxon>
        <taxon>Hominidae</taxon>
        <taxon>Homo</taxon>
    </lineage>
</organism>
<evidence type="ECO:0000255" key="1">
    <source>
        <dbReference type="PROSITE-ProRule" id="PRU00176"/>
    </source>
</evidence>
<evidence type="ECO:0000255" key="2">
    <source>
        <dbReference type="PROSITE-ProRule" id="PRU01238"/>
    </source>
</evidence>
<evidence type="ECO:0000256" key="3">
    <source>
        <dbReference type="SAM" id="MobiDB-lite"/>
    </source>
</evidence>
<evidence type="ECO:0000269" key="4">
    <source>
    </source>
</evidence>
<evidence type="ECO:0000269" key="5">
    <source>
    </source>
</evidence>
<evidence type="ECO:0000269" key="6">
    <source>
    </source>
</evidence>
<evidence type="ECO:0000269" key="7">
    <source>
    </source>
</evidence>
<evidence type="ECO:0000269" key="8">
    <source>
    </source>
</evidence>
<evidence type="ECO:0000269" key="9">
    <source>
    </source>
</evidence>
<evidence type="ECO:0000269" key="10">
    <source>
    </source>
</evidence>
<evidence type="ECO:0000269" key="11">
    <source>
    </source>
</evidence>
<evidence type="ECO:0000269" key="12">
    <source>
    </source>
</evidence>
<evidence type="ECO:0000303" key="13">
    <source>
    </source>
</evidence>
<evidence type="ECO:0000305" key="14"/>
<evidence type="ECO:0000305" key="15">
    <source>
    </source>
</evidence>
<dbReference type="EMBL" id="AF248481">
    <property type="protein sequence ID" value="AAF91330.1"/>
    <property type="molecule type" value="mRNA"/>
</dbReference>
<dbReference type="EMBL" id="AC006338">
    <property type="status" value="NOT_ANNOTATED_CDS"/>
    <property type="molecule type" value="Genomic_DNA"/>
</dbReference>
<dbReference type="EMBL" id="BC113005">
    <property type="protein sequence ID" value="AAI13006.1"/>
    <property type="molecule type" value="mRNA"/>
</dbReference>
<dbReference type="CCDS" id="CCDS35489.1">
    <molecule id="Q9NR90-2"/>
</dbReference>
<dbReference type="RefSeq" id="NP_065097.2">
    <molecule id="Q9NR90-2"/>
    <property type="nucleotide sequence ID" value="NM_020364.4"/>
</dbReference>
<dbReference type="SMR" id="Q9NR90"/>
<dbReference type="BioGRID" id="121346">
    <property type="interactions" value="1"/>
</dbReference>
<dbReference type="FunCoup" id="Q9NR90">
    <property type="interactions" value="2"/>
</dbReference>
<dbReference type="IntAct" id="Q9NR90">
    <property type="interactions" value="6"/>
</dbReference>
<dbReference type="MINT" id="Q9NR90"/>
<dbReference type="iPTMnet" id="Q9NR90"/>
<dbReference type="PhosphoSitePlus" id="Q9NR90"/>
<dbReference type="BioMuta" id="DAZ3"/>
<dbReference type="DMDM" id="44887842"/>
<dbReference type="MassIVE" id="Q9NR90"/>
<dbReference type="PeptideAtlas" id="Q9NR90"/>
<dbReference type="Antibodypedia" id="21898">
    <property type="antibodies" value="77 antibodies from 12 providers"/>
</dbReference>
<dbReference type="DNASU" id="57054"/>
<dbReference type="Ensembl" id="ENST00000382365.7">
    <molecule id="Q9NR90-2"/>
    <property type="protein sequence ID" value="ENSP00000371802.2"/>
    <property type="gene ID" value="ENSG00000187191.16"/>
</dbReference>
<dbReference type="GeneID" id="57054"/>
<dbReference type="KEGG" id="hsa:57054"/>
<dbReference type="MANE-Select" id="ENST00000382365.7">
    <molecule id="Q9NR90-2"/>
    <property type="protein sequence ID" value="ENSP00000371802.2"/>
    <property type="RefSeq nucleotide sequence ID" value="NM_020364.4"/>
    <property type="RefSeq protein sequence ID" value="NP_065097.2"/>
</dbReference>
<dbReference type="UCSC" id="uc004fwk.4">
    <molecule id="Q9NR90-1"/>
    <property type="organism name" value="human"/>
</dbReference>
<dbReference type="AGR" id="HGNC:15965"/>
<dbReference type="CTD" id="57054"/>
<dbReference type="DisGeNET" id="57054"/>
<dbReference type="GeneCards" id="DAZ3"/>
<dbReference type="GeneReviews" id="DAZ3"/>
<dbReference type="HGNC" id="HGNC:15965">
    <property type="gene designation" value="DAZ3"/>
</dbReference>
<dbReference type="HPA" id="ENSG00000187191">
    <property type="expression patterns" value="Tissue enhanced (testis)"/>
</dbReference>
<dbReference type="MalaCards" id="DAZ3"/>
<dbReference type="MIM" id="400027">
    <property type="type" value="gene"/>
</dbReference>
<dbReference type="MIM" id="415000">
    <property type="type" value="phenotype"/>
</dbReference>
<dbReference type="neXtProt" id="NX_Q9NR90"/>
<dbReference type="OpenTargets" id="ENSG00000187191"/>
<dbReference type="Orphanet" id="1646">
    <property type="disease" value="Chromosome Y microdeletion syndrome"/>
</dbReference>
<dbReference type="PharmGKB" id="PA27151"/>
<dbReference type="VEuPathDB" id="HostDB:ENSG00000187191"/>
<dbReference type="GeneTree" id="ENSGT00530000063480"/>
<dbReference type="InParanoid" id="Q9NR90"/>
<dbReference type="OMA" id="HVQEYPT"/>
<dbReference type="PAN-GO" id="Q9NR90">
    <property type="GO annotations" value="5 GO annotations based on evolutionary models"/>
</dbReference>
<dbReference type="TreeFam" id="TF324396"/>
<dbReference type="PathwayCommons" id="Q9NR90"/>
<dbReference type="SignaLink" id="Q9NR90"/>
<dbReference type="BioGRID-ORCS" id="57054">
    <property type="hits" value="10 hits in 213 CRISPR screens"/>
</dbReference>
<dbReference type="ChiTaRS" id="DAZ3">
    <property type="organism name" value="human"/>
</dbReference>
<dbReference type="GeneWiki" id="DAZ3"/>
<dbReference type="GenomeRNAi" id="57054"/>
<dbReference type="Pharos" id="Q9NR90">
    <property type="development level" value="Tbio"/>
</dbReference>
<dbReference type="PRO" id="PR:Q9NR90"/>
<dbReference type="Proteomes" id="UP000005640">
    <property type="component" value="Chromosome Y"/>
</dbReference>
<dbReference type="RNAct" id="Q9NR90">
    <property type="molecule type" value="protein"/>
</dbReference>
<dbReference type="Bgee" id="ENSG00000187191">
    <property type="expression patterns" value="Expressed in primordial germ cell in gonad and 4 other cell types or tissues"/>
</dbReference>
<dbReference type="ExpressionAtlas" id="Q9NR90">
    <property type="expression patterns" value="baseline"/>
</dbReference>
<dbReference type="GO" id="GO:0005737">
    <property type="term" value="C:cytoplasm"/>
    <property type="evidence" value="ECO:0000314"/>
    <property type="project" value="UniProtKB"/>
</dbReference>
<dbReference type="GO" id="GO:0005634">
    <property type="term" value="C:nucleus"/>
    <property type="evidence" value="ECO:0007669"/>
    <property type="project" value="UniProtKB-SubCell"/>
</dbReference>
<dbReference type="GO" id="GO:0032991">
    <property type="term" value="C:protein-containing complex"/>
    <property type="evidence" value="ECO:0000314"/>
    <property type="project" value="UniProtKB"/>
</dbReference>
<dbReference type="GO" id="GO:0003730">
    <property type="term" value="F:mRNA 3'-UTR binding"/>
    <property type="evidence" value="ECO:0000318"/>
    <property type="project" value="GO_Central"/>
</dbReference>
<dbReference type="GO" id="GO:0008494">
    <property type="term" value="F:translation activator activity"/>
    <property type="evidence" value="ECO:0000318"/>
    <property type="project" value="GO_Central"/>
</dbReference>
<dbReference type="GO" id="GO:0070935">
    <property type="term" value="P:3'-UTR-mediated mRNA stabilization"/>
    <property type="evidence" value="ECO:0000318"/>
    <property type="project" value="GO_Central"/>
</dbReference>
<dbReference type="GO" id="GO:0030154">
    <property type="term" value="P:cell differentiation"/>
    <property type="evidence" value="ECO:0007669"/>
    <property type="project" value="UniProtKB-KW"/>
</dbReference>
<dbReference type="GO" id="GO:0045948">
    <property type="term" value="P:positive regulation of translational initiation"/>
    <property type="evidence" value="ECO:0000318"/>
    <property type="project" value="GO_Central"/>
</dbReference>
<dbReference type="GO" id="GO:0007283">
    <property type="term" value="P:spermatogenesis"/>
    <property type="evidence" value="ECO:0007669"/>
    <property type="project" value="UniProtKB-KW"/>
</dbReference>
<dbReference type="CDD" id="cd12672">
    <property type="entry name" value="RRM_DAZL"/>
    <property type="match status" value="1"/>
</dbReference>
<dbReference type="FunFam" id="3.30.70.330:FF:000180">
    <property type="entry name" value="Deleted in azoospermia-like"/>
    <property type="match status" value="1"/>
</dbReference>
<dbReference type="Gene3D" id="3.30.70.330">
    <property type="match status" value="1"/>
</dbReference>
<dbReference type="InterPro" id="IPR043628">
    <property type="entry name" value="DAZ_dom"/>
</dbReference>
<dbReference type="InterPro" id="IPR037551">
    <property type="entry name" value="DAZ_RRM_vert"/>
</dbReference>
<dbReference type="InterPro" id="IPR012677">
    <property type="entry name" value="Nucleotide-bd_a/b_plait_sf"/>
</dbReference>
<dbReference type="InterPro" id="IPR035979">
    <property type="entry name" value="RBD_domain_sf"/>
</dbReference>
<dbReference type="InterPro" id="IPR000504">
    <property type="entry name" value="RRM_dom"/>
</dbReference>
<dbReference type="PANTHER" id="PTHR11176">
    <property type="entry name" value="BOULE-RELATED"/>
    <property type="match status" value="1"/>
</dbReference>
<dbReference type="PANTHER" id="PTHR11176:SF8">
    <property type="entry name" value="DELETED IN AZOOSPERMIA PROTEIN 1-RELATED"/>
    <property type="match status" value="1"/>
</dbReference>
<dbReference type="Pfam" id="PF18872">
    <property type="entry name" value="Daz"/>
    <property type="match status" value="12"/>
</dbReference>
<dbReference type="Pfam" id="PF00076">
    <property type="entry name" value="RRM_1"/>
    <property type="match status" value="1"/>
</dbReference>
<dbReference type="SMART" id="SM00360">
    <property type="entry name" value="RRM"/>
    <property type="match status" value="1"/>
</dbReference>
<dbReference type="SUPFAM" id="SSF54928">
    <property type="entry name" value="RNA-binding domain, RBD"/>
    <property type="match status" value="1"/>
</dbReference>
<dbReference type="PROSITE" id="PS51890">
    <property type="entry name" value="DAZ"/>
    <property type="match status" value="12"/>
</dbReference>
<dbReference type="PROSITE" id="PS50102">
    <property type="entry name" value="RRM"/>
    <property type="match status" value="1"/>
</dbReference>
<accession>Q9NR90</accession>
<accession>Q2KHN7</accession>
<protein>
    <recommendedName>
        <fullName>Deleted in azoospermia protein 3</fullName>
    </recommendedName>
</protein>
<reference key="1">
    <citation type="journal article" date="2000" name="Genomics">
        <title>Four DAZ genes in two clusters found in the AZFc region of the human Y chromosome.</title>
        <authorList>
            <person name="Saxena R."/>
            <person name="de Vries J.W.A."/>
            <person name="Repping S."/>
            <person name="Alagappan R.K."/>
            <person name="Skaletsky H."/>
            <person name="Brown L.G."/>
            <person name="Ma P."/>
            <person name="Chen E."/>
            <person name="Hoovers J.M.N."/>
            <person name="Page D.C."/>
        </authorList>
    </citation>
    <scope>NUCLEOTIDE SEQUENCE [MRNA] (ISOFORM 1)</scope>
    <scope>GENE STRUCTURE</scope>
    <scope>GENE NOMENCLATURE</scope>
    <scope>TISSUE SPECIFICITY</scope>
    <source>
        <tissue>Testis</tissue>
    </source>
</reference>
<reference key="2">
    <citation type="journal article" date="2003" name="Nature">
        <title>The male-specific region of the human Y chromosome is a mosaic of discrete sequence classes.</title>
        <authorList>
            <person name="Skaletsky H."/>
            <person name="Kuroda-Kawaguchi T."/>
            <person name="Minx P.J."/>
            <person name="Cordum H.S."/>
            <person name="Hillier L.W."/>
            <person name="Brown L.G."/>
            <person name="Repping S."/>
            <person name="Pyntikova T."/>
            <person name="Ali J."/>
            <person name="Bieri T."/>
            <person name="Chinwalla A."/>
            <person name="Delehaunty A."/>
            <person name="Delehaunty K."/>
            <person name="Du H."/>
            <person name="Fewell G."/>
            <person name="Fulton L."/>
            <person name="Fulton R."/>
            <person name="Graves T.A."/>
            <person name="Hou S.-F."/>
            <person name="Latrielle P."/>
            <person name="Leonard S."/>
            <person name="Mardis E."/>
            <person name="Maupin R."/>
            <person name="McPherson J."/>
            <person name="Miner T."/>
            <person name="Nash W."/>
            <person name="Nguyen C."/>
            <person name="Ozersky P."/>
            <person name="Pepin K."/>
            <person name="Rock S."/>
            <person name="Rohlfing T."/>
            <person name="Scott K."/>
            <person name="Schultz B."/>
            <person name="Strong C."/>
            <person name="Tin-Wollam A."/>
            <person name="Yang S.-P."/>
            <person name="Waterston R.H."/>
            <person name="Wilson R.K."/>
            <person name="Rozen S."/>
            <person name="Page D.C."/>
        </authorList>
    </citation>
    <scope>NUCLEOTIDE SEQUENCE [LARGE SCALE GENOMIC DNA]</scope>
</reference>
<reference key="3">
    <citation type="journal article" date="2004" name="Genome Res.">
        <title>The status, quality, and expansion of the NIH full-length cDNA project: the Mammalian Gene Collection (MGC).</title>
        <authorList>
            <consortium name="The MGC Project Team"/>
        </authorList>
    </citation>
    <scope>NUCLEOTIDE SEQUENCE [LARGE SCALE MRNA] (ISOFORM 2)</scope>
</reference>
<reference key="4">
    <citation type="journal article" date="2000" name="Genomics">
        <title>Identification of two novel proteins that interact with germ-cell-specific RNA-binding proteins DAZ and DAZL1.</title>
        <authorList>
            <person name="Tsui S."/>
            <person name="Dai T."/>
            <person name="Roettger S."/>
            <person name="Schempp W."/>
            <person name="Salido E.C."/>
            <person name="Yen P.H."/>
        </authorList>
    </citation>
    <scope>INTERACTION WITH DAZAP1 AND DAZAP2</scope>
</reference>
<reference key="5">
    <citation type="journal article" date="2000" name="Biol. Reprod.">
        <title>DAZ family proteins exist throughout male germ cell development and transit from nucleus to cytoplasm at meiosis in humans and mice.</title>
        <authorList>
            <person name="Reijo R.A."/>
            <person name="Dorfman D.M."/>
            <person name="Slee R."/>
            <person name="Renshaw A.A."/>
            <person name="Loughlin K.R."/>
            <person name="Cooke H."/>
            <person name="Page D.C."/>
        </authorList>
    </citation>
    <scope>SUBCELLULAR LOCATION</scope>
</reference>
<reference key="6">
    <citation type="journal article" date="2000" name="Gene">
        <title>In vivo and in vitro analysis of homodimerisation activity of the mouse Dazl1 protein.</title>
        <authorList>
            <person name="Ruggiu M."/>
            <person name="Cooke H.J."/>
        </authorList>
    </citation>
    <scope>INTERACTION WITH DAZL</scope>
</reference>
<reference key="7">
    <citation type="journal article" date="2001" name="Proc. Natl. Acad. Sci. U.S.A.">
        <title>A gene family required for human germ cell development evolved from an ancient meiotic gene conserved in metazoans.</title>
        <authorList>
            <person name="Xu E.Y."/>
            <person name="Moore F.L."/>
            <person name="Reijo Pera R.A."/>
        </authorList>
    </citation>
    <scope>INTERACTION WITH BOLL</scope>
</reference>
<reference key="8">
    <citation type="journal article" date="2003" name="Proc. Natl. Acad. Sci. U.S.A.">
        <title>Human Pumilio-2 is expressed in embryonic stem cells and germ cells and interacts with DAZ (Deleted in AZoospermia) and DAZ-like proteins.</title>
        <authorList>
            <person name="Moore F.L."/>
            <person name="Jaruzelska J."/>
            <person name="Fox M.S."/>
            <person name="Urano J."/>
            <person name="Firpo M.T."/>
            <person name="Turek P.J."/>
            <person name="Dorfman D.M."/>
            <person name="Reijo Pera R.A."/>
        </authorList>
    </citation>
    <scope>INTERACTION WITH PUM2; DZIP1 AND DZIP3</scope>
</reference>
<reference key="9">
    <citation type="journal article" date="2003" name="APMIS">
        <title>Polymorphic DAZ gene family in polymorphic structure of AZFc locus: artwork or functional for human spermatogenesis?</title>
        <authorList>
            <person name="Vogt P.H."/>
            <person name="Fernandes S."/>
        </authorList>
    </citation>
    <scope>REVIEW</scope>
</reference>
<reference key="10">
    <citation type="journal article" date="2000" name="J. Clin. Endocrinol. Metab.">
        <title>Male infertility caused by a de novo partial deletion of the DAZ cluster on the Y chromosome.</title>
        <authorList>
            <person name="Moro E."/>
            <person name="Ferlin A."/>
            <person name="Yen P.H."/>
            <person name="Franchi P.G."/>
            <person name="Palka G."/>
            <person name="Foresta C."/>
        </authorList>
    </citation>
    <scope>INVOLVEMENT IN SPGFY2</scope>
</reference>
<reference key="11">
    <citation type="journal article" date="2003" name="Fertil. Steril.">
        <title>Partial DAZ deletions in a family with five infertile brothers.</title>
        <authorList>
            <person name="Gianotten J."/>
            <person name="Hoffer M.J.V."/>
            <person name="De Vries J.W.A."/>
            <person name="Leschot N.J."/>
            <person name="Gerris J."/>
            <person name="van der Veen F."/>
        </authorList>
    </citation>
    <scope>INVOLVEMENT IN SPGFY2</scope>
</reference>
<reference key="12">
    <citation type="journal article" date="2019" name="J. Proteome Res.">
        <title>Cell Type-Specific Expression of Testis Elevated Genes Based on Transcriptomics and Antibody-Based Proteomics.</title>
        <authorList>
            <person name="Pineau C."/>
            <person name="Hikmet F."/>
            <person name="Zhang C."/>
            <person name="Oksvold P."/>
            <person name="Chen S."/>
            <person name="Fagerberg L."/>
            <person name="Uhlen M."/>
            <person name="Lindskog C."/>
        </authorList>
    </citation>
    <scope>SUBCELLULAR LOCATION</scope>
</reference>
<keyword id="KW-0025">Alternative splicing</keyword>
<keyword id="KW-0963">Cytoplasm</keyword>
<keyword id="KW-0217">Developmental protein</keyword>
<keyword id="KW-0221">Differentiation</keyword>
<keyword id="KW-0539">Nucleus</keyword>
<keyword id="KW-1185">Reference proteome</keyword>
<keyword id="KW-0677">Repeat</keyword>
<keyword id="KW-0694">RNA-binding</keyword>
<keyword id="KW-0744">Spermatogenesis</keyword>